<gene>
    <name type="primary">VP1</name>
</gene>
<accession>A8Y983</accession>
<organism>
    <name type="scientific">Squirrel monkey polyomavirus</name>
    <dbReference type="NCBI Taxonomy" id="452475"/>
    <lineage>
        <taxon>Viruses</taxon>
        <taxon>Monodnaviria</taxon>
        <taxon>Shotokuvirae</taxon>
        <taxon>Cossaviricota</taxon>
        <taxon>Papovaviricetes</taxon>
        <taxon>Sepolyvirales</taxon>
        <taxon>Polyomaviridae</taxon>
        <taxon>Betapolyomavirus</taxon>
        <taxon>Betapolyomavirus saboliviensis</taxon>
    </lineage>
</organism>
<dbReference type="EMBL" id="AM748741">
    <property type="protein sequence ID" value="CAO03082.1"/>
    <property type="molecule type" value="Genomic_DNA"/>
</dbReference>
<dbReference type="RefSeq" id="YP_001531348.1">
    <molecule id="A8Y983-1"/>
    <property type="nucleotide sequence ID" value="NC_009951.1"/>
</dbReference>
<dbReference type="SMR" id="A8Y983"/>
<dbReference type="GeneID" id="5714858"/>
<dbReference type="KEGG" id="vg:5714858"/>
<dbReference type="OrthoDB" id="12524at10239"/>
<dbReference type="Proteomes" id="UP000135044">
    <property type="component" value="Genome"/>
</dbReference>
<dbReference type="GO" id="GO:0042025">
    <property type="term" value="C:host cell nucleus"/>
    <property type="evidence" value="ECO:0007669"/>
    <property type="project" value="UniProtKB-SubCell"/>
</dbReference>
<dbReference type="GO" id="GO:0039620">
    <property type="term" value="C:T=7 icosahedral viral capsid"/>
    <property type="evidence" value="ECO:0007669"/>
    <property type="project" value="UniProtKB-KW"/>
</dbReference>
<dbReference type="GO" id="GO:0005198">
    <property type="term" value="F:structural molecule activity"/>
    <property type="evidence" value="ECO:0007669"/>
    <property type="project" value="InterPro"/>
</dbReference>
<dbReference type="GO" id="GO:0075509">
    <property type="term" value="P:endocytosis involved in viral entry into host cell"/>
    <property type="evidence" value="ECO:0007669"/>
    <property type="project" value="UniProtKB-KW"/>
</dbReference>
<dbReference type="GO" id="GO:0019062">
    <property type="term" value="P:virion attachment to host cell"/>
    <property type="evidence" value="ECO:0007669"/>
    <property type="project" value="UniProtKB-KW"/>
</dbReference>
<dbReference type="Gene3D" id="2.60.175.10">
    <property type="entry name" value="Capsid protein VP1,Polyomavirus"/>
    <property type="match status" value="1"/>
</dbReference>
<dbReference type="InterPro" id="IPR000662">
    <property type="entry name" value="Capsid_VP1_Polyomavir"/>
</dbReference>
<dbReference type="InterPro" id="IPR011222">
    <property type="entry name" value="dsDNA_vir_gr_I_capsid"/>
</dbReference>
<dbReference type="InterPro" id="IPR036931">
    <property type="entry name" value="Polyomavir_VP1_sf"/>
</dbReference>
<dbReference type="Pfam" id="PF00718">
    <property type="entry name" value="Polyoma_coat"/>
    <property type="match status" value="1"/>
</dbReference>
<dbReference type="PIRSF" id="PIRSF003376">
    <property type="entry name" value="Capsid_VP1_Polyomavir"/>
    <property type="match status" value="1"/>
</dbReference>
<dbReference type="SUPFAM" id="SSF88648">
    <property type="entry name" value="Group I dsDNA viruses"/>
    <property type="match status" value="1"/>
</dbReference>
<keyword id="KW-0024">Alternative initiation</keyword>
<keyword id="KW-0025">Alternative splicing</keyword>
<keyword id="KW-0167">Capsid protein</keyword>
<keyword id="KW-1015">Disulfide bond</keyword>
<keyword id="KW-1048">Host nucleus</keyword>
<keyword id="KW-0945">Host-virus interaction</keyword>
<keyword id="KW-0426">Late protein</keyword>
<keyword id="KW-0597">Phosphoprotein</keyword>
<keyword id="KW-1185">Reference proteome</keyword>
<keyword id="KW-1145">T=7 icosahedral capsid protein</keyword>
<keyword id="KW-1161">Viral attachment to host cell</keyword>
<keyword id="KW-1162">Viral penetration into host cytoplasm</keyword>
<keyword id="KW-0946">Virion</keyword>
<keyword id="KW-1164">Virus endocytosis by host</keyword>
<keyword id="KW-1160">Virus entry into host cell</keyword>
<comment type="function">
    <text evidence="2 4">Forms an icosahedral capsid with a T=7 symmetry and a 40 nm diameter. The capsid is composed of 72 pentamers linked to each other by disulfide bonds and associated with VP2 or VP3 proteins. Interacts with sialic acids on the cell surface to provide virion attachment to target cell. Once attached, the virion is internalized by endocytosis and traffics to the endoplasmic reticulum. Inside the endoplasmic reticulum, the protein folding machinery isomerizes VP1 interpentamer disulfide bonds, thereby triggering initial uncoating. Next, the virion uses the endoplasmic reticulum-associated degradation machinery to probably translocate in the cytosol before reaching the nucleus. Nuclear entry of the viral DNA involves the selective exposure and importin recognition of VP2/Vp3 nuclear localization signal. In late phase of infection, neo-synthesized VP1 encapsulates replicated genomic DNA in the nucleus, and participates in rearranging nucleosomes around the viral DNA.</text>
</comment>
<comment type="subunit">
    <text evidence="2">Homomultimer; disulfide-linked. The virus capsid is composed of 72 icosahedral units, each one composed of five disulfide-linked copies of VP1. Interacts with minor capsid proteins VP2 and VP3.</text>
</comment>
<comment type="subcellular location">
    <subcellularLocation>
        <location>Virion</location>
    </subcellularLocation>
    <subcellularLocation>
        <location evidence="2">Host nucleus</location>
    </subcellularLocation>
</comment>
<comment type="alternative products">
    <event type="alternative splicing"/>
    <event type="alternative initiation"/>
    <isoform>
        <id>A8Y983-1</id>
        <name>VP1</name>
        <name>Major capsid protein VP1</name>
        <sequence type="displayed"/>
    </isoform>
    <isoform>
        <id>A8Y987-1</id>
        <name>VP2</name>
        <name>Minor capsid protein VP2</name>
        <sequence type="external"/>
    </isoform>
    <isoform>
        <id>A8Y987-2</id>
        <name>VP3</name>
        <name>Minor capsid protein VP3</name>
        <sequence type="external"/>
    </isoform>
    <isoform>
        <id>A8Y987-3</id>
        <name>VP4</name>
        <sequence type="external"/>
    </isoform>
    <isoform>
        <id>A8Y986-1</id>
        <name>Agno</name>
        <sequence type="external"/>
    </isoform>
</comment>
<comment type="domain">
    <text evidence="2">A DNA-binding domain overlapping a bipartite nuclear localization signal is present in the N-terminal region of the protein and is required for efficient virus formation.</text>
</comment>
<comment type="domain">
    <text evidence="2">The intrinsically disordered C-terminal arm interacts with neighboring pentamers. The unstructured nature of this region allows to make different interactions depending on the structural context: pentamers present at the 12 icosahedral fivefold axes bind five pentamers, whereas pentamers present at the 60 icosahedral six-fold axes interact with six pentamers.</text>
</comment>
<comment type="miscellaneous">
    <molecule>Isoform VP1</molecule>
    <text>Produced by alternative splicing of the late mRNA.</text>
</comment>
<comment type="similarity">
    <text evidence="3">Belongs to the polyomaviruses coat protein VP1 family.</text>
</comment>
<organismHost>
    <name type="scientific">Saimiri boliviensis boliviensis</name>
    <name type="common">Bolivian squirrel monkey</name>
    <dbReference type="NCBI Taxonomy" id="39432"/>
</organismHost>
<name>VP1_POVSM</name>
<protein>
    <recommendedName>
        <fullName>Major capsid protein VP1</fullName>
    </recommendedName>
    <alternativeName>
        <fullName>Major structural protein VP1</fullName>
    </alternativeName>
</protein>
<sequence>MPLKKRSASAPRKTPQEVPRLLISGGVEVLGLKTGPDSITEVEAFLNPRMGLENTDNHYGYSENVTVAKKKDDDKPLKNQLPCYSVAKIELPMLNEDLTNDTILMWECISVKTEVVGINTLVNTHSYGKRDGESPSMPIVGLNYHFFAVGGEPIEMQYIVQNFQCDYPVGVVAMKPSPLSTQVLDPKQKSKLTGDGIFPIECWAPDPSKNENARYFATYTGGLNTPPVLNITNTVTTILLNENGVGPLCKGDQLHIAAADICGFHIEEDNKYKYRGLPRYFKLVLRKRVVKNPYPVSTLLNTLFTQMSPNVQGQDMTKQVEEVKIYEGTEKLPGDPDMIRFRNQFGQEETVIPVITN</sequence>
<proteinExistence type="inferred from homology"/>
<reference key="1">
    <citation type="journal article" date="2008" name="J. Gen. Virol.">
        <title>Molecular characterization of the first polyomavirus from a New World primate: squirrel monkey polyomavirus.</title>
        <authorList>
            <person name="Verschoor E.J."/>
            <person name="Groenewoud M.J."/>
            <person name="Fagrouch Z."/>
            <person name="Kewalapat A."/>
            <person name="van Gessel S."/>
            <person name="Kik M.J."/>
            <person name="Heeney J.L."/>
        </authorList>
    </citation>
    <scope>NUCLEOTIDE SEQUENCE [GENOMIC DNA]</scope>
    <source>
        <strain>Squi0106</strain>
    </source>
</reference>
<reference key="2">
    <citation type="journal article" date="2009" name="Virology">
        <title>The Polyomaviridae: Contributions of virus structure to our understanding of virus receptors and infectious entry.</title>
        <authorList>
            <person name="Neu U."/>
            <person name="Stehle T."/>
            <person name="Atwood W.J."/>
        </authorList>
    </citation>
    <scope>REVIEW</scope>
</reference>
<feature type="chain" id="PRO_0000356257" description="Major capsid protein VP1">
    <location>
        <begin position="1"/>
        <end position="357"/>
    </location>
</feature>
<feature type="region of interest" description="C-terminal arm" evidence="2">
    <location>
        <begin position="296"/>
        <end position="357"/>
    </location>
</feature>
<feature type="short sequence motif" description="Bipartite nuclear localization signal" evidence="2">
    <location>
        <begin position="4"/>
        <end position="13"/>
    </location>
</feature>
<feature type="modified residue" description="Phosphothreonine; by host" evidence="1">
    <location>
        <position position="329"/>
    </location>
</feature>
<evidence type="ECO:0000250" key="1"/>
<evidence type="ECO:0000250" key="2">
    <source>
        <dbReference type="UniProtKB" id="P03087"/>
    </source>
</evidence>
<evidence type="ECO:0000305" key="3"/>
<evidence type="ECO:0000305" key="4">
    <source>
    </source>
</evidence>